<dbReference type="EC" id="4.1.1.48" evidence="1"/>
<dbReference type="EMBL" id="AL935263">
    <property type="protein sequence ID" value="CCC78960.1"/>
    <property type="molecule type" value="Genomic_DNA"/>
</dbReference>
<dbReference type="RefSeq" id="WP_011101490.1">
    <property type="nucleotide sequence ID" value="NC_004567.2"/>
</dbReference>
<dbReference type="RefSeq" id="YP_004889474.1">
    <property type="nucleotide sequence ID" value="NC_004567.2"/>
</dbReference>
<dbReference type="SMR" id="Q88WI2"/>
<dbReference type="STRING" id="220668.lp_1655"/>
<dbReference type="EnsemblBacteria" id="CCC78960">
    <property type="protein sequence ID" value="CCC78960"/>
    <property type="gene ID" value="lp_1655"/>
</dbReference>
<dbReference type="KEGG" id="lpl:lp_1655"/>
<dbReference type="PATRIC" id="fig|220668.9.peg.1396"/>
<dbReference type="eggNOG" id="COG0134">
    <property type="taxonomic scope" value="Bacteria"/>
</dbReference>
<dbReference type="HOGENOM" id="CLU_034247_2_0_9"/>
<dbReference type="OrthoDB" id="9804217at2"/>
<dbReference type="PhylomeDB" id="Q88WI2"/>
<dbReference type="UniPathway" id="UPA00035">
    <property type="reaction ID" value="UER00043"/>
</dbReference>
<dbReference type="Proteomes" id="UP000000432">
    <property type="component" value="Chromosome"/>
</dbReference>
<dbReference type="GO" id="GO:0004425">
    <property type="term" value="F:indole-3-glycerol-phosphate synthase activity"/>
    <property type="evidence" value="ECO:0007669"/>
    <property type="project" value="UniProtKB-UniRule"/>
</dbReference>
<dbReference type="GO" id="GO:0004640">
    <property type="term" value="F:phosphoribosylanthranilate isomerase activity"/>
    <property type="evidence" value="ECO:0007669"/>
    <property type="project" value="TreeGrafter"/>
</dbReference>
<dbReference type="GO" id="GO:0000162">
    <property type="term" value="P:L-tryptophan biosynthetic process"/>
    <property type="evidence" value="ECO:0007669"/>
    <property type="project" value="UniProtKB-UniRule"/>
</dbReference>
<dbReference type="CDD" id="cd00331">
    <property type="entry name" value="IGPS"/>
    <property type="match status" value="1"/>
</dbReference>
<dbReference type="FunFam" id="3.20.20.70:FF:000024">
    <property type="entry name" value="Indole-3-glycerol phosphate synthase"/>
    <property type="match status" value="1"/>
</dbReference>
<dbReference type="Gene3D" id="3.20.20.70">
    <property type="entry name" value="Aldolase class I"/>
    <property type="match status" value="1"/>
</dbReference>
<dbReference type="HAMAP" id="MF_00134_B">
    <property type="entry name" value="IGPS_B"/>
    <property type="match status" value="1"/>
</dbReference>
<dbReference type="InterPro" id="IPR013785">
    <property type="entry name" value="Aldolase_TIM"/>
</dbReference>
<dbReference type="InterPro" id="IPR045186">
    <property type="entry name" value="Indole-3-glycerol_P_synth"/>
</dbReference>
<dbReference type="InterPro" id="IPR013798">
    <property type="entry name" value="Indole-3-glycerol_P_synth_dom"/>
</dbReference>
<dbReference type="InterPro" id="IPR001468">
    <property type="entry name" value="Indole-3-GlycerolPSynthase_CS"/>
</dbReference>
<dbReference type="InterPro" id="IPR011060">
    <property type="entry name" value="RibuloseP-bd_barrel"/>
</dbReference>
<dbReference type="NCBIfam" id="NF001377">
    <property type="entry name" value="PRK00278.2-4"/>
    <property type="match status" value="1"/>
</dbReference>
<dbReference type="PANTHER" id="PTHR22854:SF2">
    <property type="entry name" value="INDOLE-3-GLYCEROL-PHOSPHATE SYNTHASE"/>
    <property type="match status" value="1"/>
</dbReference>
<dbReference type="PANTHER" id="PTHR22854">
    <property type="entry name" value="TRYPTOPHAN BIOSYNTHESIS PROTEIN"/>
    <property type="match status" value="1"/>
</dbReference>
<dbReference type="Pfam" id="PF00218">
    <property type="entry name" value="IGPS"/>
    <property type="match status" value="1"/>
</dbReference>
<dbReference type="SUPFAM" id="SSF51366">
    <property type="entry name" value="Ribulose-phoshate binding barrel"/>
    <property type="match status" value="1"/>
</dbReference>
<dbReference type="PROSITE" id="PS00614">
    <property type="entry name" value="IGPS"/>
    <property type="match status" value="1"/>
</dbReference>
<comment type="catalytic activity">
    <reaction evidence="1">
        <text>1-(2-carboxyphenylamino)-1-deoxy-D-ribulose 5-phosphate + H(+) = (1S,2R)-1-C-(indol-3-yl)glycerol 3-phosphate + CO2 + H2O</text>
        <dbReference type="Rhea" id="RHEA:23476"/>
        <dbReference type="ChEBI" id="CHEBI:15377"/>
        <dbReference type="ChEBI" id="CHEBI:15378"/>
        <dbReference type="ChEBI" id="CHEBI:16526"/>
        <dbReference type="ChEBI" id="CHEBI:58613"/>
        <dbReference type="ChEBI" id="CHEBI:58866"/>
        <dbReference type="EC" id="4.1.1.48"/>
    </reaction>
</comment>
<comment type="pathway">
    <text evidence="1">Amino-acid biosynthesis; L-tryptophan biosynthesis; L-tryptophan from chorismate: step 4/5.</text>
</comment>
<comment type="similarity">
    <text evidence="1">Belongs to the TrpC family.</text>
</comment>
<organism>
    <name type="scientific">Lactiplantibacillus plantarum (strain ATCC BAA-793 / NCIMB 8826 / WCFS1)</name>
    <name type="common">Lactobacillus plantarum</name>
    <dbReference type="NCBI Taxonomy" id="220668"/>
    <lineage>
        <taxon>Bacteria</taxon>
        <taxon>Bacillati</taxon>
        <taxon>Bacillota</taxon>
        <taxon>Bacilli</taxon>
        <taxon>Lactobacillales</taxon>
        <taxon>Lactobacillaceae</taxon>
        <taxon>Lactiplantibacillus</taxon>
    </lineage>
</organism>
<accession>Q88WI2</accession>
<accession>F9UP21</accession>
<feature type="chain" id="PRO_0000154226" description="Indole-3-glycerol phosphate synthase">
    <location>
        <begin position="1"/>
        <end position="260"/>
    </location>
</feature>
<reference key="1">
    <citation type="journal article" date="2003" name="Proc. Natl. Acad. Sci. U.S.A.">
        <title>Complete genome sequence of Lactobacillus plantarum WCFS1.</title>
        <authorList>
            <person name="Kleerebezem M."/>
            <person name="Boekhorst J."/>
            <person name="van Kranenburg R."/>
            <person name="Molenaar D."/>
            <person name="Kuipers O.P."/>
            <person name="Leer R."/>
            <person name="Tarchini R."/>
            <person name="Peters S.A."/>
            <person name="Sandbrink H.M."/>
            <person name="Fiers M.W.E.J."/>
            <person name="Stiekema W."/>
            <person name="Klein Lankhorst R.M."/>
            <person name="Bron P.A."/>
            <person name="Hoffer S.M."/>
            <person name="Nierop Groot M.N."/>
            <person name="Kerkhoven R."/>
            <person name="De Vries M."/>
            <person name="Ursing B."/>
            <person name="De Vos W.M."/>
            <person name="Siezen R.J."/>
        </authorList>
    </citation>
    <scope>NUCLEOTIDE SEQUENCE [LARGE SCALE GENOMIC DNA]</scope>
    <source>
        <strain>ATCC BAA-793 / NCIMB 8826 / WCFS1</strain>
    </source>
</reference>
<reference key="2">
    <citation type="journal article" date="2012" name="J. Bacteriol.">
        <title>Complete resequencing and reannotation of the Lactobacillus plantarum WCFS1 genome.</title>
        <authorList>
            <person name="Siezen R.J."/>
            <person name="Francke C."/>
            <person name="Renckens B."/>
            <person name="Boekhorst J."/>
            <person name="Wels M."/>
            <person name="Kleerebezem M."/>
            <person name="van Hijum S.A."/>
        </authorList>
    </citation>
    <scope>NUCLEOTIDE SEQUENCE [LARGE SCALE GENOMIC DNA]</scope>
    <scope>GENOME REANNOTATION</scope>
    <source>
        <strain>ATCC BAA-793 / NCIMB 8826 / WCFS1</strain>
    </source>
</reference>
<evidence type="ECO:0000255" key="1">
    <source>
        <dbReference type="HAMAP-Rule" id="MF_00134"/>
    </source>
</evidence>
<keyword id="KW-0028">Amino-acid biosynthesis</keyword>
<keyword id="KW-0057">Aromatic amino acid biosynthesis</keyword>
<keyword id="KW-0210">Decarboxylase</keyword>
<keyword id="KW-0456">Lyase</keyword>
<keyword id="KW-1185">Reference proteome</keyword>
<keyword id="KW-0822">Tryptophan biosynthesis</keyword>
<proteinExistence type="inferred from homology"/>
<sequence>MILDQLVQASQQRVQKVPVRERVKRIQQARKMTTPVLSFEAMLAQPGLQLIGEVKRASPSKGLIAAEFDYLQIAQDYVAAGIDAISVLTEPRYFKGQLSYLQAITQTVSVPTLRKDFIVAASQIASARIAGASAVLLIVAILTPVQLQAFITLAHELNLSALVEVHTTAESKQAVAAGARIIGINNRNLKDFSVNFATSCQLRQAVPAECYVVAESGIQTATQAQQLAAAGFDAMLVGETLMRAPDKGQAVMQLRAGVRG</sequence>
<protein>
    <recommendedName>
        <fullName evidence="1">Indole-3-glycerol phosphate synthase</fullName>
        <shortName evidence="1">IGPS</shortName>
        <ecNumber evidence="1">4.1.1.48</ecNumber>
    </recommendedName>
</protein>
<gene>
    <name evidence="1" type="primary">trpC</name>
    <name type="ordered locus">lp_1655</name>
</gene>
<name>TRPC_LACPL</name>